<gene>
    <name type="ordered locus">Mbar_A3716</name>
</gene>
<keyword id="KW-0378">Hydrolase</keyword>
<proteinExistence type="inferred from homology"/>
<protein>
    <recommendedName>
        <fullName evidence="1">UPF0173 metal-dependent hydrolase Mbar_A3716</fullName>
    </recommendedName>
</protein>
<name>Y3716_METBF</name>
<dbReference type="EMBL" id="CP000099">
    <property type="protein sequence ID" value="AAZ72579.1"/>
    <property type="molecule type" value="Genomic_DNA"/>
</dbReference>
<dbReference type="SMR" id="Q464W3"/>
<dbReference type="STRING" id="269797.Mbar_A3716"/>
<dbReference type="PaxDb" id="269797-Mbar_A3716"/>
<dbReference type="KEGG" id="mba:Mbar_A3716"/>
<dbReference type="eggNOG" id="arCOG00497">
    <property type="taxonomic scope" value="Archaea"/>
</dbReference>
<dbReference type="HOGENOM" id="CLU_070010_4_0_2"/>
<dbReference type="OrthoDB" id="28313at2157"/>
<dbReference type="GO" id="GO:0016787">
    <property type="term" value="F:hydrolase activity"/>
    <property type="evidence" value="ECO:0007669"/>
    <property type="project" value="UniProtKB-UniRule"/>
</dbReference>
<dbReference type="Gene3D" id="3.60.15.10">
    <property type="entry name" value="Ribonuclease Z/Hydroxyacylglutathione hydrolase-like"/>
    <property type="match status" value="1"/>
</dbReference>
<dbReference type="HAMAP" id="MF_00457">
    <property type="entry name" value="UPF0173"/>
    <property type="match status" value="1"/>
</dbReference>
<dbReference type="InterPro" id="IPR001279">
    <property type="entry name" value="Metallo-B-lactamas"/>
</dbReference>
<dbReference type="InterPro" id="IPR036866">
    <property type="entry name" value="RibonucZ/Hydroxyglut_hydro"/>
</dbReference>
<dbReference type="InterPro" id="IPR022877">
    <property type="entry name" value="UPF0173"/>
</dbReference>
<dbReference type="InterPro" id="IPR050114">
    <property type="entry name" value="UPF0173_UPF0282_UlaG_hydrolase"/>
</dbReference>
<dbReference type="NCBIfam" id="NF001911">
    <property type="entry name" value="PRK00685.1"/>
    <property type="match status" value="1"/>
</dbReference>
<dbReference type="PANTHER" id="PTHR43546:SF3">
    <property type="entry name" value="UPF0173 METAL-DEPENDENT HYDROLASE MJ1163"/>
    <property type="match status" value="1"/>
</dbReference>
<dbReference type="PANTHER" id="PTHR43546">
    <property type="entry name" value="UPF0173 METAL-DEPENDENT HYDROLASE MJ1163-RELATED"/>
    <property type="match status" value="1"/>
</dbReference>
<dbReference type="Pfam" id="PF13483">
    <property type="entry name" value="Lactamase_B_3"/>
    <property type="match status" value="1"/>
</dbReference>
<dbReference type="SMART" id="SM00849">
    <property type="entry name" value="Lactamase_B"/>
    <property type="match status" value="1"/>
</dbReference>
<dbReference type="SUPFAM" id="SSF56281">
    <property type="entry name" value="Metallo-hydrolase/oxidoreductase"/>
    <property type="match status" value="1"/>
</dbReference>
<reference key="1">
    <citation type="journal article" date="2006" name="J. Bacteriol.">
        <title>The Methanosarcina barkeri genome: comparative analysis with Methanosarcina acetivorans and Methanosarcina mazei reveals extensive rearrangement within methanosarcinal genomes.</title>
        <authorList>
            <person name="Maeder D.L."/>
            <person name="Anderson I."/>
            <person name="Brettin T.S."/>
            <person name="Bruce D.C."/>
            <person name="Gilna P."/>
            <person name="Han C.S."/>
            <person name="Lapidus A."/>
            <person name="Metcalf W.W."/>
            <person name="Saunders E."/>
            <person name="Tapia R."/>
            <person name="Sowers K.R."/>
        </authorList>
    </citation>
    <scope>NUCLEOTIDE SEQUENCE [LARGE SCALE GENOMIC DNA]</scope>
    <source>
        <strain>Fusaro / DSM 804</strain>
    </source>
</reference>
<evidence type="ECO:0000255" key="1">
    <source>
        <dbReference type="HAMAP-Rule" id="MF_00457"/>
    </source>
</evidence>
<sequence length="230" mass="25010">MVGVKITWLGHSAFLLEAEKKLLIDPFISGNPLAPCSPEELNPDIITVTHGHRDHLGDTIEIGKRTRCRIITIHEVANYIKSKGVFAEGMGKGGTVNVEGIKLTMTDALHSSSIDASGFSFDGGSPAGFIIQINGHSIYHAGDTGVFGDMKLIGELYEPELVLLPIGDKFTMGIKEATKAVELILPRTVIPMHYSTFDVIKQDPEEFKRAVEAKVDTKVIIMKPGESIDL</sequence>
<feature type="chain" id="PRO_1000013506" description="UPF0173 metal-dependent hydrolase Mbar_A3716">
    <location>
        <begin position="1"/>
        <end position="230"/>
    </location>
</feature>
<comment type="similarity">
    <text evidence="1">Belongs to the UPF0173 family.</text>
</comment>
<accession>Q464W3</accession>
<organism>
    <name type="scientific">Methanosarcina barkeri (strain Fusaro / DSM 804)</name>
    <dbReference type="NCBI Taxonomy" id="269797"/>
    <lineage>
        <taxon>Archaea</taxon>
        <taxon>Methanobacteriati</taxon>
        <taxon>Methanobacteriota</taxon>
        <taxon>Stenosarchaea group</taxon>
        <taxon>Methanomicrobia</taxon>
        <taxon>Methanosarcinales</taxon>
        <taxon>Methanosarcinaceae</taxon>
        <taxon>Methanosarcina</taxon>
    </lineage>
</organism>